<accession>A1W0I0</accession>
<name>GPDA_CAMJJ</name>
<keyword id="KW-0963">Cytoplasm</keyword>
<keyword id="KW-0444">Lipid biosynthesis</keyword>
<keyword id="KW-0443">Lipid metabolism</keyword>
<keyword id="KW-0520">NAD</keyword>
<keyword id="KW-0521">NADP</keyword>
<keyword id="KW-0547">Nucleotide-binding</keyword>
<keyword id="KW-0560">Oxidoreductase</keyword>
<keyword id="KW-0594">Phospholipid biosynthesis</keyword>
<keyword id="KW-1208">Phospholipid metabolism</keyword>
<gene>
    <name evidence="1" type="primary">gpsA</name>
    <name type="ordered locus">CJJ81176_1211</name>
</gene>
<dbReference type="EC" id="1.1.1.94" evidence="1"/>
<dbReference type="EMBL" id="CP000538">
    <property type="protein sequence ID" value="EAQ72072.1"/>
    <property type="molecule type" value="Genomic_DNA"/>
</dbReference>
<dbReference type="SMR" id="A1W0I0"/>
<dbReference type="KEGG" id="cjj:CJJ81176_1211"/>
<dbReference type="eggNOG" id="COG0240">
    <property type="taxonomic scope" value="Bacteria"/>
</dbReference>
<dbReference type="HOGENOM" id="CLU_033449_0_2_7"/>
<dbReference type="UniPathway" id="UPA00940"/>
<dbReference type="Proteomes" id="UP000000646">
    <property type="component" value="Chromosome"/>
</dbReference>
<dbReference type="GO" id="GO:0005829">
    <property type="term" value="C:cytosol"/>
    <property type="evidence" value="ECO:0007669"/>
    <property type="project" value="TreeGrafter"/>
</dbReference>
<dbReference type="GO" id="GO:0047952">
    <property type="term" value="F:glycerol-3-phosphate dehydrogenase [NAD(P)+] activity"/>
    <property type="evidence" value="ECO:0007669"/>
    <property type="project" value="UniProtKB-UniRule"/>
</dbReference>
<dbReference type="GO" id="GO:0051287">
    <property type="term" value="F:NAD binding"/>
    <property type="evidence" value="ECO:0007669"/>
    <property type="project" value="InterPro"/>
</dbReference>
<dbReference type="GO" id="GO:0005975">
    <property type="term" value="P:carbohydrate metabolic process"/>
    <property type="evidence" value="ECO:0007669"/>
    <property type="project" value="InterPro"/>
</dbReference>
<dbReference type="GO" id="GO:0046167">
    <property type="term" value="P:glycerol-3-phosphate biosynthetic process"/>
    <property type="evidence" value="ECO:0007669"/>
    <property type="project" value="UniProtKB-UniRule"/>
</dbReference>
<dbReference type="GO" id="GO:0046168">
    <property type="term" value="P:glycerol-3-phosphate catabolic process"/>
    <property type="evidence" value="ECO:0007669"/>
    <property type="project" value="InterPro"/>
</dbReference>
<dbReference type="GO" id="GO:0006650">
    <property type="term" value="P:glycerophospholipid metabolic process"/>
    <property type="evidence" value="ECO:0007669"/>
    <property type="project" value="UniProtKB-UniRule"/>
</dbReference>
<dbReference type="GO" id="GO:0008654">
    <property type="term" value="P:phospholipid biosynthetic process"/>
    <property type="evidence" value="ECO:0007669"/>
    <property type="project" value="UniProtKB-KW"/>
</dbReference>
<dbReference type="FunFam" id="1.10.1040.10:FF:000025">
    <property type="entry name" value="Glycerol-3-phosphate dehydrogenase [NAD(P)+]"/>
    <property type="match status" value="1"/>
</dbReference>
<dbReference type="Gene3D" id="1.10.1040.10">
    <property type="entry name" value="N-(1-d-carboxylethyl)-l-norvaline Dehydrogenase, domain 2"/>
    <property type="match status" value="1"/>
</dbReference>
<dbReference type="Gene3D" id="3.40.50.720">
    <property type="entry name" value="NAD(P)-binding Rossmann-like Domain"/>
    <property type="match status" value="1"/>
</dbReference>
<dbReference type="HAMAP" id="MF_00394">
    <property type="entry name" value="NAD_Glyc3P_dehydrog"/>
    <property type="match status" value="1"/>
</dbReference>
<dbReference type="InterPro" id="IPR008927">
    <property type="entry name" value="6-PGluconate_DH-like_C_sf"/>
</dbReference>
<dbReference type="InterPro" id="IPR013328">
    <property type="entry name" value="6PGD_dom2"/>
</dbReference>
<dbReference type="InterPro" id="IPR006168">
    <property type="entry name" value="G3P_DH_NAD-dep"/>
</dbReference>
<dbReference type="InterPro" id="IPR006109">
    <property type="entry name" value="G3P_DH_NAD-dep_C"/>
</dbReference>
<dbReference type="InterPro" id="IPR011128">
    <property type="entry name" value="G3P_DH_NAD-dep_N"/>
</dbReference>
<dbReference type="InterPro" id="IPR036291">
    <property type="entry name" value="NAD(P)-bd_dom_sf"/>
</dbReference>
<dbReference type="NCBIfam" id="NF000940">
    <property type="entry name" value="PRK00094.1-2"/>
    <property type="match status" value="1"/>
</dbReference>
<dbReference type="NCBIfam" id="NF000942">
    <property type="entry name" value="PRK00094.1-4"/>
    <property type="match status" value="1"/>
</dbReference>
<dbReference type="NCBIfam" id="NF000943">
    <property type="entry name" value="PRK00094.2-1"/>
    <property type="match status" value="1"/>
</dbReference>
<dbReference type="PANTHER" id="PTHR11728">
    <property type="entry name" value="GLYCEROL-3-PHOSPHATE DEHYDROGENASE"/>
    <property type="match status" value="1"/>
</dbReference>
<dbReference type="PANTHER" id="PTHR11728:SF1">
    <property type="entry name" value="GLYCEROL-3-PHOSPHATE DEHYDROGENASE [NAD(+)] 2, CHLOROPLASTIC"/>
    <property type="match status" value="1"/>
</dbReference>
<dbReference type="Pfam" id="PF07479">
    <property type="entry name" value="NAD_Gly3P_dh_C"/>
    <property type="match status" value="1"/>
</dbReference>
<dbReference type="Pfam" id="PF01210">
    <property type="entry name" value="NAD_Gly3P_dh_N"/>
    <property type="match status" value="1"/>
</dbReference>
<dbReference type="PIRSF" id="PIRSF000114">
    <property type="entry name" value="Glycerol-3-P_dh"/>
    <property type="match status" value="1"/>
</dbReference>
<dbReference type="SUPFAM" id="SSF48179">
    <property type="entry name" value="6-phosphogluconate dehydrogenase C-terminal domain-like"/>
    <property type="match status" value="1"/>
</dbReference>
<dbReference type="SUPFAM" id="SSF51735">
    <property type="entry name" value="NAD(P)-binding Rossmann-fold domains"/>
    <property type="match status" value="1"/>
</dbReference>
<dbReference type="PROSITE" id="PS00957">
    <property type="entry name" value="NAD_G3PDH"/>
    <property type="match status" value="1"/>
</dbReference>
<protein>
    <recommendedName>
        <fullName evidence="1">Glycerol-3-phosphate dehydrogenase [NAD(P)+]</fullName>
        <ecNumber evidence="1">1.1.1.94</ecNumber>
    </recommendedName>
    <alternativeName>
        <fullName evidence="1">NAD(P)(+)-dependent glycerol-3-phosphate dehydrogenase</fullName>
    </alternativeName>
    <alternativeName>
        <fullName evidence="1">NAD(P)H-dependent dihydroxyacetone-phosphate reductase</fullName>
    </alternativeName>
</protein>
<proteinExistence type="inferred from homology"/>
<feature type="chain" id="PRO_1000049494" description="Glycerol-3-phosphate dehydrogenase [NAD(P)+]">
    <location>
        <begin position="1"/>
        <end position="297"/>
    </location>
</feature>
<feature type="active site" description="Proton acceptor" evidence="1">
    <location>
        <position position="161"/>
    </location>
</feature>
<feature type="binding site" evidence="1">
    <location>
        <position position="11"/>
    </location>
    <ligand>
        <name>NADPH</name>
        <dbReference type="ChEBI" id="CHEBI:57783"/>
    </ligand>
</feature>
<feature type="binding site" evidence="1">
    <location>
        <position position="33"/>
    </location>
    <ligand>
        <name>NADPH</name>
        <dbReference type="ChEBI" id="CHEBI:57783"/>
    </ligand>
</feature>
<feature type="binding site" evidence="1">
    <location>
        <position position="79"/>
    </location>
    <ligand>
        <name>NADPH</name>
        <dbReference type="ChEBI" id="CHEBI:57783"/>
    </ligand>
</feature>
<feature type="binding site" evidence="1">
    <location>
        <position position="79"/>
    </location>
    <ligand>
        <name>sn-glycerol 3-phosphate</name>
        <dbReference type="ChEBI" id="CHEBI:57597"/>
    </ligand>
</feature>
<feature type="binding site" evidence="1">
    <location>
        <position position="107"/>
    </location>
    <ligand>
        <name>sn-glycerol 3-phosphate</name>
        <dbReference type="ChEBI" id="CHEBI:57597"/>
    </ligand>
</feature>
<feature type="binding site" evidence="1">
    <location>
        <position position="109"/>
    </location>
    <ligand>
        <name>sn-glycerol 3-phosphate</name>
        <dbReference type="ChEBI" id="CHEBI:57597"/>
    </ligand>
</feature>
<feature type="binding site" evidence="1">
    <location>
        <position position="111"/>
    </location>
    <ligand>
        <name>NADPH</name>
        <dbReference type="ChEBI" id="CHEBI:57783"/>
    </ligand>
</feature>
<feature type="binding site" evidence="1">
    <location>
        <position position="161"/>
    </location>
    <ligand>
        <name>sn-glycerol 3-phosphate</name>
        <dbReference type="ChEBI" id="CHEBI:57597"/>
    </ligand>
</feature>
<feature type="binding site" evidence="1">
    <location>
        <position position="214"/>
    </location>
    <ligand>
        <name>sn-glycerol 3-phosphate</name>
        <dbReference type="ChEBI" id="CHEBI:57597"/>
    </ligand>
</feature>
<feature type="binding site" evidence="1">
    <location>
        <position position="224"/>
    </location>
    <ligand>
        <name>sn-glycerol 3-phosphate</name>
        <dbReference type="ChEBI" id="CHEBI:57597"/>
    </ligand>
</feature>
<feature type="binding site" evidence="1">
    <location>
        <position position="225"/>
    </location>
    <ligand>
        <name>NADPH</name>
        <dbReference type="ChEBI" id="CHEBI:57783"/>
    </ligand>
</feature>
<feature type="binding site" evidence="1">
    <location>
        <position position="225"/>
    </location>
    <ligand>
        <name>sn-glycerol 3-phosphate</name>
        <dbReference type="ChEBI" id="CHEBI:57597"/>
    </ligand>
</feature>
<feature type="binding site" evidence="1">
    <location>
        <position position="226"/>
    </location>
    <ligand>
        <name>sn-glycerol 3-phosphate</name>
        <dbReference type="ChEBI" id="CHEBI:57597"/>
    </ligand>
</feature>
<feature type="binding site" evidence="1">
    <location>
        <position position="249"/>
    </location>
    <ligand>
        <name>NADPH</name>
        <dbReference type="ChEBI" id="CHEBI:57783"/>
    </ligand>
</feature>
<feature type="binding site" evidence="1">
    <location>
        <position position="251"/>
    </location>
    <ligand>
        <name>NADPH</name>
        <dbReference type="ChEBI" id="CHEBI:57783"/>
    </ligand>
</feature>
<evidence type="ECO:0000255" key="1">
    <source>
        <dbReference type="HAMAP-Rule" id="MF_00394"/>
    </source>
</evidence>
<reference key="1">
    <citation type="submission" date="2006-12" db="EMBL/GenBank/DDBJ databases">
        <authorList>
            <person name="Fouts D.E."/>
            <person name="Nelson K.E."/>
            <person name="Sebastian Y."/>
        </authorList>
    </citation>
    <scope>NUCLEOTIDE SEQUENCE [LARGE SCALE GENOMIC DNA]</scope>
    <source>
        <strain>81-176</strain>
    </source>
</reference>
<organism>
    <name type="scientific">Campylobacter jejuni subsp. jejuni serotype O:23/36 (strain 81-176)</name>
    <dbReference type="NCBI Taxonomy" id="354242"/>
    <lineage>
        <taxon>Bacteria</taxon>
        <taxon>Pseudomonadati</taxon>
        <taxon>Campylobacterota</taxon>
        <taxon>Epsilonproteobacteria</taxon>
        <taxon>Campylobacterales</taxon>
        <taxon>Campylobacteraceae</taxon>
        <taxon>Campylobacter</taxon>
    </lineage>
</organism>
<sequence>MRIAVIGAGKWGSALHLALKENHNCFISSLHQRDLEDFVSIKEALECEYLIFALSSQGMRVWLKENFINKGQKILIASKGIEDQSCQFLDEIFLDFVPKENFCVLSGPSFAAEVMQKLPTALMISGINQELCKKFASFFPDFIKTYIDNDVRGAEICGAYKNVLAIASGISDGLKLGNNARAALISRGLIEMHRFGKFFGTKEETFLGLSGAGDLFLTATSVLSRNYRVGLKLAQNQKLDSILAELNEVAEGVKTAYAIEKLAKMKGIYTPIVNEVVAIFKGKSVQEATQNLLKQND</sequence>
<comment type="function">
    <text evidence="1">Catalyzes the reduction of the glycolytic intermediate dihydroxyacetone phosphate (DHAP) to sn-glycerol 3-phosphate (G3P), the key precursor for phospholipid synthesis.</text>
</comment>
<comment type="catalytic activity">
    <reaction evidence="1">
        <text>sn-glycerol 3-phosphate + NAD(+) = dihydroxyacetone phosphate + NADH + H(+)</text>
        <dbReference type="Rhea" id="RHEA:11092"/>
        <dbReference type="ChEBI" id="CHEBI:15378"/>
        <dbReference type="ChEBI" id="CHEBI:57540"/>
        <dbReference type="ChEBI" id="CHEBI:57597"/>
        <dbReference type="ChEBI" id="CHEBI:57642"/>
        <dbReference type="ChEBI" id="CHEBI:57945"/>
        <dbReference type="EC" id="1.1.1.94"/>
    </reaction>
    <physiologicalReaction direction="right-to-left" evidence="1">
        <dbReference type="Rhea" id="RHEA:11094"/>
    </physiologicalReaction>
</comment>
<comment type="catalytic activity">
    <reaction evidence="1">
        <text>sn-glycerol 3-phosphate + NADP(+) = dihydroxyacetone phosphate + NADPH + H(+)</text>
        <dbReference type="Rhea" id="RHEA:11096"/>
        <dbReference type="ChEBI" id="CHEBI:15378"/>
        <dbReference type="ChEBI" id="CHEBI:57597"/>
        <dbReference type="ChEBI" id="CHEBI:57642"/>
        <dbReference type="ChEBI" id="CHEBI:57783"/>
        <dbReference type="ChEBI" id="CHEBI:58349"/>
        <dbReference type="EC" id="1.1.1.94"/>
    </reaction>
    <physiologicalReaction direction="right-to-left" evidence="1">
        <dbReference type="Rhea" id="RHEA:11098"/>
    </physiologicalReaction>
</comment>
<comment type="pathway">
    <text evidence="1">Membrane lipid metabolism; glycerophospholipid metabolism.</text>
</comment>
<comment type="subcellular location">
    <subcellularLocation>
        <location evidence="1">Cytoplasm</location>
    </subcellularLocation>
</comment>
<comment type="similarity">
    <text evidence="1">Belongs to the NAD-dependent glycerol-3-phosphate dehydrogenase family.</text>
</comment>